<keyword id="KW-0025">Alternative splicing</keyword>
<keyword id="KW-1262">Eukaryotic host gene expression shutoff by virus</keyword>
<keyword id="KW-1035">Host cytoplasm</keyword>
<keyword id="KW-1190">Host gene expression shutoff by virus</keyword>
<keyword id="KW-1192">Host mRNA suppression by virus</keyword>
<keyword id="KW-1048">Host nucleus</keyword>
<keyword id="KW-0945">Host-virus interaction</keyword>
<keyword id="KW-1090">Inhibition of host innate immune response by virus</keyword>
<keyword id="KW-1114">Inhibition of host interferon signaling pathway by virus</keyword>
<keyword id="KW-1102">Inhibition of host PKR by virus</keyword>
<keyword id="KW-1103">Inhibition of host pre-mRNA processing by virus</keyword>
<keyword id="KW-1088">Inhibition of host RIG-I by virus</keyword>
<keyword id="KW-1113">Inhibition of host RLR pathway by virus</keyword>
<keyword id="KW-0922">Interferon antiviral system evasion</keyword>
<keyword id="KW-0694">RNA-binding</keyword>
<keyword id="KW-0832">Ubl conjugation</keyword>
<keyword id="KW-0899">Viral immunoevasion</keyword>
<protein>
    <recommendedName>
        <fullName evidence="1">Non-structural protein 1</fullName>
        <shortName evidence="1">NS1</shortName>
    </recommendedName>
    <alternativeName>
        <fullName evidence="1">NS1A</fullName>
    </alternativeName>
</protein>
<dbReference type="EMBL" id="M65020">
    <property type="protein sequence ID" value="AAA43493.1"/>
    <property type="molecule type" value="Genomic_RNA"/>
</dbReference>
<dbReference type="SMR" id="Q04262"/>
<dbReference type="Proteomes" id="UP000130281">
    <property type="component" value="Genome"/>
</dbReference>
<dbReference type="GO" id="GO:0030430">
    <property type="term" value="C:host cell cytoplasm"/>
    <property type="evidence" value="ECO:0007669"/>
    <property type="project" value="UniProtKB-SubCell"/>
</dbReference>
<dbReference type="GO" id="GO:0042025">
    <property type="term" value="C:host cell nucleus"/>
    <property type="evidence" value="ECO:0007669"/>
    <property type="project" value="UniProtKB-SubCell"/>
</dbReference>
<dbReference type="GO" id="GO:0030291">
    <property type="term" value="F:protein serine/threonine kinase inhibitor activity"/>
    <property type="evidence" value="ECO:0007669"/>
    <property type="project" value="UniProtKB-KW"/>
</dbReference>
<dbReference type="GO" id="GO:0003723">
    <property type="term" value="F:RNA binding"/>
    <property type="evidence" value="ECO:0007669"/>
    <property type="project" value="UniProtKB-KW"/>
</dbReference>
<dbReference type="GO" id="GO:0039540">
    <property type="term" value="P:symbiont-mediated suppression of host cytoplasmic pattern recognition receptor signaling pathway via inhibition of RIG-I activity"/>
    <property type="evidence" value="ECO:0007669"/>
    <property type="project" value="UniProtKB-KW"/>
</dbReference>
<dbReference type="GO" id="GO:0039657">
    <property type="term" value="P:symbiont-mediated suppression of host gene expression"/>
    <property type="evidence" value="ECO:0007669"/>
    <property type="project" value="UniProtKB-KW"/>
</dbReference>
<dbReference type="GO" id="GO:0039524">
    <property type="term" value="P:symbiont-mediated suppression of host mRNA processing"/>
    <property type="evidence" value="ECO:0007669"/>
    <property type="project" value="UniProtKB-KW"/>
</dbReference>
<dbReference type="GO" id="GO:0039580">
    <property type="term" value="P:symbiont-mediated suppression of host PKR/eIFalpha signaling"/>
    <property type="evidence" value="ECO:0007669"/>
    <property type="project" value="UniProtKB-KW"/>
</dbReference>
<dbReference type="GO" id="GO:0039502">
    <property type="term" value="P:symbiont-mediated suppression of host type I interferon-mediated signaling pathway"/>
    <property type="evidence" value="ECO:0007669"/>
    <property type="project" value="UniProtKB-KW"/>
</dbReference>
<dbReference type="Gene3D" id="3.30.420.330">
    <property type="entry name" value="Influenza virus non-structural protein, effector domain"/>
    <property type="match status" value="1"/>
</dbReference>
<dbReference type="Gene3D" id="1.10.287.10">
    <property type="entry name" value="S15/NS1, RNA-binding"/>
    <property type="match status" value="1"/>
</dbReference>
<dbReference type="HAMAP" id="MF_04066">
    <property type="entry name" value="INFV_NS1"/>
    <property type="match status" value="1"/>
</dbReference>
<dbReference type="InterPro" id="IPR004208">
    <property type="entry name" value="NS1"/>
</dbReference>
<dbReference type="InterPro" id="IPR000256">
    <property type="entry name" value="NS1A"/>
</dbReference>
<dbReference type="InterPro" id="IPR038064">
    <property type="entry name" value="NS1A_effect_dom-like_sf"/>
</dbReference>
<dbReference type="InterPro" id="IPR009068">
    <property type="entry name" value="uS15_NS1_RNA-bd_sf"/>
</dbReference>
<dbReference type="Pfam" id="PF00600">
    <property type="entry name" value="Flu_NS1"/>
    <property type="match status" value="1"/>
</dbReference>
<dbReference type="SUPFAM" id="SSF143021">
    <property type="entry name" value="Ns1 effector domain-like"/>
    <property type="match status" value="1"/>
</dbReference>
<dbReference type="SUPFAM" id="SSF47060">
    <property type="entry name" value="S15/NS1 RNA-binding domain"/>
    <property type="match status" value="1"/>
</dbReference>
<proteinExistence type="inferred from homology"/>
<organism>
    <name type="scientific">Influenza A virus (strain A/Equine/Jillin/1/1989 H3N8)</name>
    <dbReference type="NCBI Taxonomy" id="385585"/>
    <lineage>
        <taxon>Viruses</taxon>
        <taxon>Riboviria</taxon>
        <taxon>Orthornavirae</taxon>
        <taxon>Negarnaviricota</taxon>
        <taxon>Polyploviricotina</taxon>
        <taxon>Insthoviricetes</taxon>
        <taxon>Articulavirales</taxon>
        <taxon>Orthomyxoviridae</taxon>
        <taxon>Alphainfluenzavirus</taxon>
        <taxon>Alphainfluenzavirus influenzae</taxon>
        <taxon>Influenza A virus</taxon>
    </lineage>
</organism>
<evidence type="ECO:0000255" key="1">
    <source>
        <dbReference type="HAMAP-Rule" id="MF_04066"/>
    </source>
</evidence>
<evidence type="ECO:0000256" key="2">
    <source>
        <dbReference type="SAM" id="MobiDB-lite"/>
    </source>
</evidence>
<comment type="function">
    <text evidence="1">Inhibits post-transcriptional processing of cellular pre-mRNA, by binding and inhibiting two cellular proteins that are required for the 3'-end processing of cellular pre-mRNAs: the 30 kDa cleavage and polyadenylation specificity factor/CPSF4 and the poly(A)-binding protein 2/PABPN1. In turn, unprocessed 3' end pre-mRNAs accumulate in the host nucleus and are no longer exported to the cytoplasm. Cellular protein synthesis is thereby shut off very early after virus infection. Viral protein synthesis is not affected by the inhibition of the cellular 3' end processing machinery because the poly(A) tails of viral mRNAs are produced by the viral polymerase through a stuttering mechanism. Prevents the establishment of the cellular antiviral state by inhibiting TRIM25-mediated RIGI ubiquitination, which normally triggers the antiviral transduction signal that leads to the activation of type I IFN genes by transcription factors IRF3 and IRF7. Also binds poly(A) and U6 snRNA. Inhibits the integrated stress response (ISR) in the infected cell by blocking dsRNA binding by EIF2AK2/PKR and further phosphorylation of EIF2S1/EIF-2ALPHA. Stress granule formation is thus inhibited, which allows protein synthesis and viral replication.</text>
</comment>
<comment type="subunit">
    <text evidence="1">Homodimer. Interacts with host TRIM25 (via coiled coil); this interaction specifically inhibits TRIM25 multimerization and TRIM25-mediated RIGI CARD ubiquitination. Interacts with human EIF2AK2/PKR, CPSF4, IVNS1ABP and PABPN1.</text>
</comment>
<comment type="subcellular location">
    <subcellularLocation>
        <location evidence="1">Host nucleus</location>
    </subcellularLocation>
    <subcellularLocation>
        <location evidence="1">Host cytoplasm</location>
    </subcellularLocation>
    <text evidence="1">In uninfected, transfected cells, NS1 is localized in the nucleus. Only in virus infected cells, the nuclear export signal is unveiled, presumably by a viral protein, and a fraction of NS1 is exported in the cytoplasm.</text>
</comment>
<comment type="alternative products">
    <event type="alternative splicing"/>
    <isoform>
        <id>Q04262-1</id>
        <name>NS1</name>
        <sequence type="displayed"/>
    </isoform>
    <isoform>
        <id>Q04265-1</id>
        <name>NEP</name>
        <name>NS2</name>
        <sequence type="external"/>
    </isoform>
</comment>
<comment type="domain">
    <text evidence="1">The dsRNA-binding region is required for suppression of RNA silencing.</text>
</comment>
<comment type="PTM">
    <text evidence="1">Upon interferon induction, ISGylated via host HERC5; this results in the impairment of NS1 interaction with RNA targets due to its inability to form homodimers and to interact with host EIF2AK2/PKR.</text>
</comment>
<comment type="similarity">
    <text evidence="1">Belongs to the influenza A viruses NS1 family.</text>
</comment>
<accession>Q04262</accession>
<reference key="1">
    <citation type="submission" date="1991-06" db="EMBL/GenBank/DDBJ databases">
        <title>Emergence of a new influenza A virus in horses from avian sources.</title>
        <authorList>
            <person name="Guo Y."/>
            <person name="Wang M.G."/>
            <person name="Kawaoka Y."/>
            <person name="Gorman O.T."/>
            <person name="Ito T."/>
            <person name="Webster R.G."/>
        </authorList>
    </citation>
    <scope>NUCLEOTIDE SEQUENCE [GENOMIC RNA]</scope>
</reference>
<sequence length="230" mass="25880">MDSNTTTSFQVDCYLWYIRKLLSMRNMCDAPFDDRLRRDQKALKGRGSTLGLDLRVATMGGKKIVENILKSEADENLKIAIASSPAPRYITDMSIEEISREWYMLMPRQKITGGLMVKMDQAIMDNIIILKANFSVLFDQLDTLVSLRAFTEAGAIVAEISPIPSMPGHSTEDVKNAIGILIGGLEWNDNSIRASENIQRFAWGIRDEDGGPPLPPKQKRYMARRVEPKV</sequence>
<name>NS1_I89A7</name>
<organismHost>
    <name type="scientific">Aves</name>
    <dbReference type="NCBI Taxonomy" id="8782"/>
</organismHost>
<organismHost>
    <name type="scientific">Equus caballus</name>
    <name type="common">Horse</name>
    <dbReference type="NCBI Taxonomy" id="9796"/>
</organismHost>
<feature type="chain" id="PRO_0000324280" description="Non-structural protein 1">
    <location>
        <begin position="1"/>
        <end position="230"/>
    </location>
</feature>
<feature type="region of interest" description="RNA-binding and homodimerization" evidence="1">
    <location>
        <begin position="1"/>
        <end position="73"/>
    </location>
</feature>
<feature type="region of interest" description="CPSF4-binding" evidence="1">
    <location>
        <begin position="180"/>
        <end position="215"/>
    </location>
</feature>
<feature type="region of interest" description="Disordered" evidence="2">
    <location>
        <begin position="206"/>
        <end position="230"/>
    </location>
</feature>
<feature type="region of interest" description="PABPN1-binding" evidence="1">
    <location>
        <begin position="223"/>
        <end position="230"/>
    </location>
</feature>
<feature type="short sequence motif" description="Nuclear localization signal" evidence="1">
    <location>
        <begin position="34"/>
        <end position="38"/>
    </location>
</feature>
<feature type="short sequence motif" description="Nuclear export signal" evidence="1">
    <location>
        <begin position="137"/>
        <end position="146"/>
    </location>
</feature>
<gene>
    <name evidence="1" type="primary">NS</name>
</gene>